<proteinExistence type="inferred from homology"/>
<comment type="function">
    <text evidence="1">Binds to the 23S rRNA.</text>
</comment>
<comment type="subunit">
    <text evidence="1">Part of the 50S ribosomal subunit.</text>
</comment>
<comment type="similarity">
    <text evidence="1">Belongs to the universal ribosomal protein uL15 family.</text>
</comment>
<reference key="1">
    <citation type="journal article" date="2009" name="Science">
        <title>The dynamics and time scale of ongoing genomic erosion in symbiotic bacteria.</title>
        <authorList>
            <person name="Moran N.A."/>
            <person name="McLaughlin H.J."/>
            <person name="Sorek R."/>
        </authorList>
    </citation>
    <scope>NUCLEOTIDE SEQUENCE [LARGE SCALE GENOMIC DNA]</scope>
    <source>
        <strain>Tuc7</strain>
    </source>
</reference>
<gene>
    <name evidence="1" type="primary">rplO</name>
    <name type="ordered locus">BUAPTUC7_499</name>
</gene>
<accession>B8D830</accession>
<evidence type="ECO:0000255" key="1">
    <source>
        <dbReference type="HAMAP-Rule" id="MF_01341"/>
    </source>
</evidence>
<evidence type="ECO:0000256" key="2">
    <source>
        <dbReference type="SAM" id="MobiDB-lite"/>
    </source>
</evidence>
<evidence type="ECO:0000305" key="3"/>
<name>RL15_BUCAT</name>
<sequence length="144" mass="15757">MRLNTLSPANGARHSRKRLGRGIGSGFGKTSGRGHKGQKSRSGSSIRRGFEGGQMPLYRRLPKFGFNSRKKNITTEVRLSDLSNLSTNIIDLNVLKQENIIKKNIKYAKIILSGKLTVPLIIRGLLVSKGARSEIENTGGKVEG</sequence>
<feature type="chain" id="PRO_1000166280" description="Large ribosomal subunit protein uL15">
    <location>
        <begin position="1"/>
        <end position="144"/>
    </location>
</feature>
<feature type="region of interest" description="Disordered" evidence="2">
    <location>
        <begin position="1"/>
        <end position="52"/>
    </location>
</feature>
<feature type="compositionally biased region" description="Gly residues" evidence="2">
    <location>
        <begin position="21"/>
        <end position="31"/>
    </location>
</feature>
<organism>
    <name type="scientific">Buchnera aphidicola subsp. Acyrthosiphon pisum (strain Tuc7)</name>
    <dbReference type="NCBI Taxonomy" id="561501"/>
    <lineage>
        <taxon>Bacteria</taxon>
        <taxon>Pseudomonadati</taxon>
        <taxon>Pseudomonadota</taxon>
        <taxon>Gammaproteobacteria</taxon>
        <taxon>Enterobacterales</taxon>
        <taxon>Erwiniaceae</taxon>
        <taxon>Buchnera</taxon>
    </lineage>
</organism>
<protein>
    <recommendedName>
        <fullName evidence="1">Large ribosomal subunit protein uL15</fullName>
    </recommendedName>
    <alternativeName>
        <fullName evidence="3">50S ribosomal protein L15</fullName>
    </alternativeName>
</protein>
<keyword id="KW-0687">Ribonucleoprotein</keyword>
<keyword id="KW-0689">Ribosomal protein</keyword>
<keyword id="KW-0694">RNA-binding</keyword>
<keyword id="KW-0699">rRNA-binding</keyword>
<dbReference type="EMBL" id="CP001158">
    <property type="protein sequence ID" value="ACL30295.1"/>
    <property type="molecule type" value="Genomic_DNA"/>
</dbReference>
<dbReference type="RefSeq" id="WP_009874456.1">
    <property type="nucleotide sequence ID" value="NC_011834.1"/>
</dbReference>
<dbReference type="SMR" id="B8D830"/>
<dbReference type="KEGG" id="bau:BUAPTUC7_499"/>
<dbReference type="HOGENOM" id="CLU_055188_4_2_6"/>
<dbReference type="GO" id="GO:0022625">
    <property type="term" value="C:cytosolic large ribosomal subunit"/>
    <property type="evidence" value="ECO:0007669"/>
    <property type="project" value="TreeGrafter"/>
</dbReference>
<dbReference type="GO" id="GO:0019843">
    <property type="term" value="F:rRNA binding"/>
    <property type="evidence" value="ECO:0007669"/>
    <property type="project" value="UniProtKB-UniRule"/>
</dbReference>
<dbReference type="GO" id="GO:0003735">
    <property type="term" value="F:structural constituent of ribosome"/>
    <property type="evidence" value="ECO:0007669"/>
    <property type="project" value="InterPro"/>
</dbReference>
<dbReference type="GO" id="GO:0006412">
    <property type="term" value="P:translation"/>
    <property type="evidence" value="ECO:0007669"/>
    <property type="project" value="UniProtKB-UniRule"/>
</dbReference>
<dbReference type="Gene3D" id="3.100.10.10">
    <property type="match status" value="1"/>
</dbReference>
<dbReference type="HAMAP" id="MF_01341">
    <property type="entry name" value="Ribosomal_uL15"/>
    <property type="match status" value="1"/>
</dbReference>
<dbReference type="InterPro" id="IPR030878">
    <property type="entry name" value="Ribosomal_uL15"/>
</dbReference>
<dbReference type="InterPro" id="IPR021131">
    <property type="entry name" value="Ribosomal_uL15/eL18"/>
</dbReference>
<dbReference type="InterPro" id="IPR036227">
    <property type="entry name" value="Ribosomal_uL15/eL18_sf"/>
</dbReference>
<dbReference type="InterPro" id="IPR005749">
    <property type="entry name" value="Ribosomal_uL15_bac-type"/>
</dbReference>
<dbReference type="InterPro" id="IPR001196">
    <property type="entry name" value="Ribosomal_uL15_CS"/>
</dbReference>
<dbReference type="NCBIfam" id="TIGR01071">
    <property type="entry name" value="rplO_bact"/>
    <property type="match status" value="1"/>
</dbReference>
<dbReference type="PANTHER" id="PTHR12934">
    <property type="entry name" value="50S RIBOSOMAL PROTEIN L15"/>
    <property type="match status" value="1"/>
</dbReference>
<dbReference type="PANTHER" id="PTHR12934:SF11">
    <property type="entry name" value="LARGE RIBOSOMAL SUBUNIT PROTEIN UL15M"/>
    <property type="match status" value="1"/>
</dbReference>
<dbReference type="Pfam" id="PF00828">
    <property type="entry name" value="Ribosomal_L27A"/>
    <property type="match status" value="1"/>
</dbReference>
<dbReference type="SUPFAM" id="SSF52080">
    <property type="entry name" value="Ribosomal proteins L15p and L18e"/>
    <property type="match status" value="1"/>
</dbReference>
<dbReference type="PROSITE" id="PS00475">
    <property type="entry name" value="RIBOSOMAL_L15"/>
    <property type="match status" value="1"/>
</dbReference>